<name>CXD2_MOUSE</name>
<gene>
    <name type="primary">Gjd2</name>
    <name type="synonym">Gja9</name>
</gene>
<feature type="chain" id="PRO_0000057836" description="Gap junction delta-2 protein">
    <location>
        <begin position="1"/>
        <end position="321"/>
    </location>
</feature>
<feature type="topological domain" description="Cytoplasmic" evidence="1">
    <location>
        <begin position="1"/>
        <end position="19"/>
    </location>
</feature>
<feature type="transmembrane region" description="Helical" evidence="1">
    <location>
        <begin position="20"/>
        <end position="42"/>
    </location>
</feature>
<feature type="topological domain" description="Extracellular" evidence="1">
    <location>
        <begin position="43"/>
        <end position="75"/>
    </location>
</feature>
<feature type="transmembrane region" description="Helical" evidence="1">
    <location>
        <begin position="76"/>
        <end position="98"/>
    </location>
</feature>
<feature type="topological domain" description="Cytoplasmic" evidence="1">
    <location>
        <begin position="99"/>
        <end position="197"/>
    </location>
</feature>
<feature type="transmembrane region" description="Helical" evidence="1">
    <location>
        <begin position="198"/>
        <end position="220"/>
    </location>
</feature>
<feature type="topological domain" description="Extracellular" evidence="1">
    <location>
        <begin position="221"/>
        <end position="252"/>
    </location>
</feature>
<feature type="transmembrane region" description="Helical" evidence="1">
    <location>
        <begin position="253"/>
        <end position="275"/>
    </location>
</feature>
<feature type="topological domain" description="Cytoplasmic" evidence="1">
    <location>
        <begin position="276"/>
        <end position="321"/>
    </location>
</feature>
<feature type="region of interest" description="Disordered" evidence="2">
    <location>
        <begin position="120"/>
        <end position="141"/>
    </location>
</feature>
<feature type="compositionally biased region" description="Gly residues" evidence="2">
    <location>
        <begin position="125"/>
        <end position="137"/>
    </location>
</feature>
<feature type="sequence conflict" description="In Ref. 2; AAF86379." evidence="3" ref="2">
    <location>
        <position position="17"/>
    </location>
</feature>
<feature type="sequence conflict" description="In Ref. 1; AAD13684." evidence="3" ref="1">
    <original>I</original>
    <variation>V</variation>
    <location>
        <position position="76"/>
    </location>
</feature>
<feature type="sequence conflict" description="In Ref. 1; AAD13684." evidence="3" ref="1">
    <original>I</original>
    <variation>M</variation>
    <location>
        <position position="149"/>
    </location>
</feature>
<sequence>MGEWTILERLLEAAVQQHSTMIGRILLTVVVIFRILIVAIVGETVYDDEQTMFVCNTLQPGCNQACYDRAFPISHIRYWVFQIIMVCTPSLCFITYSVHQSAKQRERRYSTVFLALDRDPAESIGGPGGTGGGGSGGSKREDKKLQNAIVNGVLQNTETTSKETEPDCLEVKELTPHPSGLRTAARSKLRRQEGISRFYIIQVVFRNALEIGFLVGQYFLYGFSVPGLYECNRYPCIKEVECYVSRPTEKTVFLVFMFAVSGICVVLNLAELNHLGWRKIKLAVRGAQAKRKSVYEIRNKDLPRVSVPNFGRTQSSDSAYV</sequence>
<protein>
    <recommendedName>
        <fullName>Gap junction delta-2 protein</fullName>
    </recommendedName>
    <alternativeName>
        <fullName>Connexin-36</fullName>
        <shortName>Cx36</shortName>
    </alternativeName>
    <alternativeName>
        <fullName>Gap junction alpha-9 protein</fullName>
    </alternativeName>
</protein>
<accession>O54851</accession>
<accession>Q6PDP3</accession>
<accession>Q9JII0</accession>
<organism>
    <name type="scientific">Mus musculus</name>
    <name type="common">Mouse</name>
    <dbReference type="NCBI Taxonomy" id="10090"/>
    <lineage>
        <taxon>Eukaryota</taxon>
        <taxon>Metazoa</taxon>
        <taxon>Chordata</taxon>
        <taxon>Craniata</taxon>
        <taxon>Vertebrata</taxon>
        <taxon>Euteleostomi</taxon>
        <taxon>Mammalia</taxon>
        <taxon>Eutheria</taxon>
        <taxon>Euarchontoglires</taxon>
        <taxon>Glires</taxon>
        <taxon>Rodentia</taxon>
        <taxon>Myomorpha</taxon>
        <taxon>Muroidea</taxon>
        <taxon>Muridae</taxon>
        <taxon>Murinae</taxon>
        <taxon>Mus</taxon>
        <taxon>Mus</taxon>
    </lineage>
</organism>
<proteinExistence type="evidence at protein level"/>
<dbReference type="EMBL" id="AF016190">
    <property type="protein sequence ID" value="AAD13684.1"/>
    <property type="molecule type" value="Genomic_DNA"/>
</dbReference>
<dbReference type="EMBL" id="AF226992">
    <property type="protein sequence ID" value="AAF86379.1"/>
    <property type="molecule type" value="Genomic_DNA"/>
</dbReference>
<dbReference type="EMBL" id="AL844569">
    <property type="status" value="NOT_ANNOTATED_CDS"/>
    <property type="molecule type" value="Genomic_DNA"/>
</dbReference>
<dbReference type="EMBL" id="CH466519">
    <property type="protein sequence ID" value="EDL27860.1"/>
    <property type="molecule type" value="Genomic_DNA"/>
</dbReference>
<dbReference type="EMBL" id="BC058595">
    <property type="protein sequence ID" value="AAH58595.1"/>
    <property type="molecule type" value="mRNA"/>
</dbReference>
<dbReference type="CCDS" id="CCDS16563.1"/>
<dbReference type="RefSeq" id="NP_001405277.1">
    <property type="nucleotide sequence ID" value="NM_001418348.1"/>
</dbReference>
<dbReference type="RefSeq" id="NP_001405278.1">
    <property type="nucleotide sequence ID" value="NM_001418349.1"/>
</dbReference>
<dbReference type="RefSeq" id="NP_034420.2">
    <property type="nucleotide sequence ID" value="NM_010290.2"/>
</dbReference>
<dbReference type="RefSeq" id="XP_017171134.1">
    <property type="nucleotide sequence ID" value="XM_017315645.1"/>
</dbReference>
<dbReference type="SMR" id="O54851"/>
<dbReference type="BioGRID" id="199930">
    <property type="interactions" value="1"/>
</dbReference>
<dbReference type="FunCoup" id="O54851">
    <property type="interactions" value="16"/>
</dbReference>
<dbReference type="STRING" id="10090.ENSMUSP00000087742"/>
<dbReference type="iPTMnet" id="O54851"/>
<dbReference type="PhosphoSitePlus" id="O54851"/>
<dbReference type="PaxDb" id="10090-ENSMUSP00000087742"/>
<dbReference type="ProteomicsDB" id="279224"/>
<dbReference type="Antibodypedia" id="9771">
    <property type="antibodies" value="266 antibodies from 29 providers"/>
</dbReference>
<dbReference type="DNASU" id="14617"/>
<dbReference type="Ensembl" id="ENSMUST00000090275.5">
    <property type="protein sequence ID" value="ENSMUSP00000087742.5"/>
    <property type="gene ID" value="ENSMUSG00000068615.5"/>
</dbReference>
<dbReference type="GeneID" id="14617"/>
<dbReference type="KEGG" id="mmu:14617"/>
<dbReference type="UCSC" id="uc008lpu.1">
    <property type="organism name" value="mouse"/>
</dbReference>
<dbReference type="AGR" id="MGI:1334209"/>
<dbReference type="CTD" id="57369"/>
<dbReference type="MGI" id="MGI:1334209">
    <property type="gene designation" value="Gjd2"/>
</dbReference>
<dbReference type="VEuPathDB" id="HostDB:ENSMUSG00000068615"/>
<dbReference type="eggNOG" id="ENOG502QV4X">
    <property type="taxonomic scope" value="Eukaryota"/>
</dbReference>
<dbReference type="GeneTree" id="ENSGT01130000278276"/>
<dbReference type="HOGENOM" id="CLU_037388_4_0_1"/>
<dbReference type="InParanoid" id="O54851"/>
<dbReference type="OMA" id="KEMEPDC"/>
<dbReference type="OrthoDB" id="10012477at2759"/>
<dbReference type="PhylomeDB" id="O54851"/>
<dbReference type="TreeFam" id="TF329606"/>
<dbReference type="Reactome" id="R-MMU-112303">
    <property type="pathway name" value="Electric Transmission Across Gap Junctions"/>
</dbReference>
<dbReference type="Reactome" id="R-MMU-190861">
    <property type="pathway name" value="Gap junction assembly"/>
</dbReference>
<dbReference type="BioGRID-ORCS" id="14617">
    <property type="hits" value="2 hits in 77 CRISPR screens"/>
</dbReference>
<dbReference type="PRO" id="PR:O54851"/>
<dbReference type="Proteomes" id="UP000000589">
    <property type="component" value="Chromosome 2"/>
</dbReference>
<dbReference type="RNAct" id="O54851">
    <property type="molecule type" value="protein"/>
</dbReference>
<dbReference type="Bgee" id="ENSMUSG00000068615">
    <property type="expression patterns" value="Expressed in thoracic ganglion and 86 other cell types or tissues"/>
</dbReference>
<dbReference type="GO" id="GO:0005922">
    <property type="term" value="C:connexin complex"/>
    <property type="evidence" value="ECO:0007669"/>
    <property type="project" value="InterPro"/>
</dbReference>
<dbReference type="GO" id="GO:0005921">
    <property type="term" value="C:gap junction"/>
    <property type="evidence" value="ECO:0000266"/>
    <property type="project" value="MGI"/>
</dbReference>
<dbReference type="GO" id="GO:0045202">
    <property type="term" value="C:synapse"/>
    <property type="evidence" value="ECO:0007669"/>
    <property type="project" value="GOC"/>
</dbReference>
<dbReference type="GO" id="GO:0007267">
    <property type="term" value="P:cell-cell signaling"/>
    <property type="evidence" value="ECO:0000315"/>
    <property type="project" value="MGI"/>
</dbReference>
<dbReference type="GO" id="GO:0007268">
    <property type="term" value="P:chemical synaptic transmission"/>
    <property type="evidence" value="ECO:0000315"/>
    <property type="project" value="MGI"/>
</dbReference>
<dbReference type="GO" id="GO:0019228">
    <property type="term" value="P:neuronal action potential"/>
    <property type="evidence" value="ECO:0000315"/>
    <property type="project" value="MGI"/>
</dbReference>
<dbReference type="GO" id="GO:0007601">
    <property type="term" value="P:visual perception"/>
    <property type="evidence" value="ECO:0000315"/>
    <property type="project" value="MGI"/>
</dbReference>
<dbReference type="Gene3D" id="1.20.1440.80">
    <property type="entry name" value="Gap junction channel protein cysteine-rich domain"/>
    <property type="match status" value="1"/>
</dbReference>
<dbReference type="InterPro" id="IPR000500">
    <property type="entry name" value="Connexin"/>
</dbReference>
<dbReference type="InterPro" id="IPR002260">
    <property type="entry name" value="Connexin36"/>
</dbReference>
<dbReference type="InterPro" id="IPR019570">
    <property type="entry name" value="Connexin_CCC"/>
</dbReference>
<dbReference type="InterPro" id="IPR017990">
    <property type="entry name" value="Connexin_CS"/>
</dbReference>
<dbReference type="InterPro" id="IPR013092">
    <property type="entry name" value="Connexin_N"/>
</dbReference>
<dbReference type="InterPro" id="IPR038359">
    <property type="entry name" value="Connexin_N_sf"/>
</dbReference>
<dbReference type="PANTHER" id="PTHR11984">
    <property type="entry name" value="CONNEXIN"/>
    <property type="match status" value="1"/>
</dbReference>
<dbReference type="PANTHER" id="PTHR11984:SF32">
    <property type="entry name" value="GAP JUNCTION DELTA-2 PROTEIN"/>
    <property type="match status" value="1"/>
</dbReference>
<dbReference type="Pfam" id="PF00029">
    <property type="entry name" value="Connexin"/>
    <property type="match status" value="1"/>
</dbReference>
<dbReference type="PRINTS" id="PR00206">
    <property type="entry name" value="CONNEXIN"/>
</dbReference>
<dbReference type="PRINTS" id="PR01131">
    <property type="entry name" value="CONNEXIN36"/>
</dbReference>
<dbReference type="SMART" id="SM00037">
    <property type="entry name" value="CNX"/>
    <property type="match status" value="1"/>
</dbReference>
<dbReference type="SMART" id="SM01089">
    <property type="entry name" value="Connexin_CCC"/>
    <property type="match status" value="1"/>
</dbReference>
<dbReference type="PROSITE" id="PS00407">
    <property type="entry name" value="CONNEXINS_1"/>
    <property type="match status" value="1"/>
</dbReference>
<dbReference type="PROSITE" id="PS00408">
    <property type="entry name" value="CONNEXINS_2"/>
    <property type="match status" value="1"/>
</dbReference>
<reference key="1">
    <citation type="journal article" date="1998" name="Eur. J. Neurosci.">
        <title>Cloning of a new gap junction gene (Cx36) highly expressed in mammalian brain neurons.</title>
        <authorList>
            <person name="Condorelli D.F."/>
            <person name="Parenti R."/>
            <person name="Spinella F."/>
            <person name="Trovato Salinaro A."/>
            <person name="Belluardo N."/>
            <person name="Cardile V."/>
            <person name="Cicirata F."/>
        </authorList>
    </citation>
    <scope>NUCLEOTIDE SEQUENCE [GENOMIC DNA]</scope>
</reference>
<reference key="2">
    <citation type="journal article" date="2000" name="Gene">
        <title>Genomic organization and chromosomal localization of the mouse Connexin36 (mCx36) gene.</title>
        <authorList>
            <person name="Cicirata F."/>
            <person name="Parenti R."/>
            <person name="Spinella F."/>
            <person name="Giglio S."/>
            <person name="Tuorto F."/>
            <person name="Zuffardi O."/>
            <person name="Gulisano M."/>
        </authorList>
    </citation>
    <scope>NUCLEOTIDE SEQUENCE [GENOMIC DNA]</scope>
    <source>
        <strain>129/Sv</strain>
    </source>
</reference>
<reference key="3">
    <citation type="journal article" date="2009" name="PLoS Biol.">
        <title>Lineage-specific biology revealed by a finished genome assembly of the mouse.</title>
        <authorList>
            <person name="Church D.M."/>
            <person name="Goodstadt L."/>
            <person name="Hillier L.W."/>
            <person name="Zody M.C."/>
            <person name="Goldstein S."/>
            <person name="She X."/>
            <person name="Bult C.J."/>
            <person name="Agarwala R."/>
            <person name="Cherry J.L."/>
            <person name="DiCuccio M."/>
            <person name="Hlavina W."/>
            <person name="Kapustin Y."/>
            <person name="Meric P."/>
            <person name="Maglott D."/>
            <person name="Birtle Z."/>
            <person name="Marques A.C."/>
            <person name="Graves T."/>
            <person name="Zhou S."/>
            <person name="Teague B."/>
            <person name="Potamousis K."/>
            <person name="Churas C."/>
            <person name="Place M."/>
            <person name="Herschleb J."/>
            <person name="Runnheim R."/>
            <person name="Forrest D."/>
            <person name="Amos-Landgraf J."/>
            <person name="Schwartz D.C."/>
            <person name="Cheng Z."/>
            <person name="Lindblad-Toh K."/>
            <person name="Eichler E.E."/>
            <person name="Ponting C.P."/>
        </authorList>
    </citation>
    <scope>NUCLEOTIDE SEQUENCE [LARGE SCALE GENOMIC DNA]</scope>
    <source>
        <strain>C57BL/6J</strain>
    </source>
</reference>
<reference key="4">
    <citation type="submission" date="2005-07" db="EMBL/GenBank/DDBJ databases">
        <authorList>
            <person name="Mural R.J."/>
            <person name="Adams M.D."/>
            <person name="Myers E.W."/>
            <person name="Smith H.O."/>
            <person name="Venter J.C."/>
        </authorList>
    </citation>
    <scope>NUCLEOTIDE SEQUENCE [LARGE SCALE GENOMIC DNA]</scope>
</reference>
<reference key="5">
    <citation type="journal article" date="2004" name="Genome Res.">
        <title>The status, quality, and expansion of the NIH full-length cDNA project: the Mammalian Gene Collection (MGC).</title>
        <authorList>
            <consortium name="The MGC Project Team"/>
        </authorList>
    </citation>
    <scope>NUCLEOTIDE SEQUENCE [LARGE SCALE MRNA]</scope>
    <source>
        <tissue>Eye</tissue>
    </source>
</reference>
<reference key="6">
    <citation type="journal article" date="2010" name="Cell">
        <title>A tissue-specific atlas of mouse protein phosphorylation and expression.</title>
        <authorList>
            <person name="Huttlin E.L."/>
            <person name="Jedrychowski M.P."/>
            <person name="Elias J.E."/>
            <person name="Goswami T."/>
            <person name="Rad R."/>
            <person name="Beausoleil S.A."/>
            <person name="Villen J."/>
            <person name="Haas W."/>
            <person name="Sowa M.E."/>
            <person name="Gygi S.P."/>
        </authorList>
    </citation>
    <scope>IDENTIFICATION BY MASS SPECTROMETRY [LARGE SCALE ANALYSIS]</scope>
    <source>
        <tissue>Brain</tissue>
    </source>
</reference>
<evidence type="ECO:0000255" key="1"/>
<evidence type="ECO:0000256" key="2">
    <source>
        <dbReference type="SAM" id="MobiDB-lite"/>
    </source>
</evidence>
<evidence type="ECO:0000305" key="3"/>
<keyword id="KW-0965">Cell junction</keyword>
<keyword id="KW-1003">Cell membrane</keyword>
<keyword id="KW-0303">Gap junction</keyword>
<keyword id="KW-0472">Membrane</keyword>
<keyword id="KW-1185">Reference proteome</keyword>
<keyword id="KW-0812">Transmembrane</keyword>
<keyword id="KW-1133">Transmembrane helix</keyword>
<comment type="function">
    <text>One gap junction consists of a cluster of closely packed pairs of transmembrane channels, the connexons, through which materials of low MW diffuse from one cell to a neighboring cell.</text>
</comment>
<comment type="subunit">
    <text>A connexon is composed of a hexamer of connexins.</text>
</comment>
<comment type="subcellular location">
    <subcellularLocation>
        <location>Cell membrane</location>
        <topology>Multi-pass membrane protein</topology>
    </subcellularLocation>
    <subcellularLocation>
        <location>Cell junction</location>
        <location>Gap junction</location>
    </subcellularLocation>
</comment>
<comment type="tissue specificity">
    <text>Highly expressed in neurons.</text>
</comment>
<comment type="similarity">
    <text evidence="3">Belongs to the connexin family. Delta-type subfamily.</text>
</comment>